<accession>A6VHS1</accession>
<gene>
    <name evidence="1" type="primary">rps8e</name>
    <name type="ordered locus">MmarC7_0930</name>
</gene>
<name>RS8E_METM7</name>
<sequence length="128" mass="14345">MAIWQGASRRLSTGAKVWRAAKKHKREMGRPAAETQISDRIKRKIVRCRGANLKVKLEKTNYANVFDQANKVCKKVAVTKVLDNKANKHYIRRNVMTKGAIIETEMGKAKVTSRPGQDGVVNAVLLTE</sequence>
<proteinExistence type="inferred from homology"/>
<protein>
    <recommendedName>
        <fullName evidence="1">Small ribosomal subunit protein eS8</fullName>
    </recommendedName>
    <alternativeName>
        <fullName evidence="2">30S ribosomal protein S8e</fullName>
    </alternativeName>
</protein>
<comment type="subunit">
    <text evidence="1">Part of the 30S ribosomal subunit.</text>
</comment>
<comment type="similarity">
    <text evidence="1">Belongs to the eukaryotic ribosomal protein eS8 family.</text>
</comment>
<keyword id="KW-0687">Ribonucleoprotein</keyword>
<keyword id="KW-0689">Ribosomal protein</keyword>
<organism>
    <name type="scientific">Methanococcus maripaludis (strain C7 / ATCC BAA-1331)</name>
    <dbReference type="NCBI Taxonomy" id="426368"/>
    <lineage>
        <taxon>Archaea</taxon>
        <taxon>Methanobacteriati</taxon>
        <taxon>Methanobacteriota</taxon>
        <taxon>Methanomada group</taxon>
        <taxon>Methanococci</taxon>
        <taxon>Methanococcales</taxon>
        <taxon>Methanococcaceae</taxon>
        <taxon>Methanococcus</taxon>
    </lineage>
</organism>
<reference key="1">
    <citation type="submission" date="2007-06" db="EMBL/GenBank/DDBJ databases">
        <title>Complete sequence of Methanococcus maripaludis C7.</title>
        <authorList>
            <consortium name="US DOE Joint Genome Institute"/>
            <person name="Copeland A."/>
            <person name="Lucas S."/>
            <person name="Lapidus A."/>
            <person name="Barry K."/>
            <person name="Glavina del Rio T."/>
            <person name="Dalin E."/>
            <person name="Tice H."/>
            <person name="Pitluck S."/>
            <person name="Clum A."/>
            <person name="Schmutz J."/>
            <person name="Larimer F."/>
            <person name="Land M."/>
            <person name="Hauser L."/>
            <person name="Kyrpides N."/>
            <person name="Anderson I."/>
            <person name="Sieprawska-Lupa M."/>
            <person name="Whitman W.B."/>
            <person name="Richardson P."/>
        </authorList>
    </citation>
    <scope>NUCLEOTIDE SEQUENCE [LARGE SCALE GENOMIC DNA]</scope>
    <source>
        <strain>C7 / ATCC BAA-1331</strain>
    </source>
</reference>
<evidence type="ECO:0000255" key="1">
    <source>
        <dbReference type="HAMAP-Rule" id="MF_00029"/>
    </source>
</evidence>
<evidence type="ECO:0000305" key="2"/>
<feature type="chain" id="PRO_1000002342" description="Small ribosomal subunit protein eS8">
    <location>
        <begin position="1"/>
        <end position="128"/>
    </location>
</feature>
<dbReference type="EMBL" id="CP000745">
    <property type="protein sequence ID" value="ABR65997.1"/>
    <property type="molecule type" value="Genomic_DNA"/>
</dbReference>
<dbReference type="SMR" id="A6VHS1"/>
<dbReference type="STRING" id="426368.MmarC7_0930"/>
<dbReference type="KEGG" id="mmz:MmarC7_0930"/>
<dbReference type="eggNOG" id="arCOG04154">
    <property type="taxonomic scope" value="Archaea"/>
</dbReference>
<dbReference type="HOGENOM" id="CLU_080597_2_1_2"/>
<dbReference type="OrthoDB" id="372305at2157"/>
<dbReference type="GO" id="GO:1990904">
    <property type="term" value="C:ribonucleoprotein complex"/>
    <property type="evidence" value="ECO:0007669"/>
    <property type="project" value="UniProtKB-KW"/>
</dbReference>
<dbReference type="GO" id="GO:0005840">
    <property type="term" value="C:ribosome"/>
    <property type="evidence" value="ECO:0007669"/>
    <property type="project" value="UniProtKB-KW"/>
</dbReference>
<dbReference type="GO" id="GO:0003735">
    <property type="term" value="F:structural constituent of ribosome"/>
    <property type="evidence" value="ECO:0007669"/>
    <property type="project" value="InterPro"/>
</dbReference>
<dbReference type="GO" id="GO:0006412">
    <property type="term" value="P:translation"/>
    <property type="evidence" value="ECO:0007669"/>
    <property type="project" value="UniProtKB-UniRule"/>
</dbReference>
<dbReference type="CDD" id="cd11382">
    <property type="entry name" value="Ribosomal_S8e"/>
    <property type="match status" value="1"/>
</dbReference>
<dbReference type="FunFam" id="2.40.10.310:FF:000002">
    <property type="entry name" value="30S ribosomal protein S8e"/>
    <property type="match status" value="1"/>
</dbReference>
<dbReference type="Gene3D" id="2.40.10.310">
    <property type="match status" value="1"/>
</dbReference>
<dbReference type="HAMAP" id="MF_00029">
    <property type="entry name" value="Ribosomal_eS8"/>
    <property type="match status" value="1"/>
</dbReference>
<dbReference type="InterPro" id="IPR001047">
    <property type="entry name" value="Ribosomal_eS8"/>
</dbReference>
<dbReference type="InterPro" id="IPR018283">
    <property type="entry name" value="Ribosomal_eS8_CS"/>
</dbReference>
<dbReference type="InterPro" id="IPR020919">
    <property type="entry name" value="Ribosomal_protein_eS8_arc"/>
</dbReference>
<dbReference type="InterPro" id="IPR022309">
    <property type="entry name" value="Ribosomal_Se8/biogenesis_NSA2"/>
</dbReference>
<dbReference type="NCBIfam" id="TIGR00307">
    <property type="entry name" value="eS8"/>
    <property type="match status" value="1"/>
</dbReference>
<dbReference type="PANTHER" id="PTHR10394">
    <property type="entry name" value="40S RIBOSOMAL PROTEIN S8"/>
    <property type="match status" value="1"/>
</dbReference>
<dbReference type="Pfam" id="PF01201">
    <property type="entry name" value="Ribosomal_S8e"/>
    <property type="match status" value="1"/>
</dbReference>
<dbReference type="PROSITE" id="PS01193">
    <property type="entry name" value="RIBOSOMAL_S8E"/>
    <property type="match status" value="1"/>
</dbReference>